<accession>A8H745</accession>
<gene>
    <name evidence="1" type="primary">glmM</name>
    <name type="ordered locus">Spea_3065</name>
</gene>
<evidence type="ECO:0000255" key="1">
    <source>
        <dbReference type="HAMAP-Rule" id="MF_01554"/>
    </source>
</evidence>
<keyword id="KW-0413">Isomerase</keyword>
<keyword id="KW-0460">Magnesium</keyword>
<keyword id="KW-0479">Metal-binding</keyword>
<keyword id="KW-0597">Phosphoprotein</keyword>
<keyword id="KW-1185">Reference proteome</keyword>
<feature type="chain" id="PRO_1000087778" description="Phosphoglucosamine mutase">
    <location>
        <begin position="1"/>
        <end position="445"/>
    </location>
</feature>
<feature type="active site" description="Phosphoserine intermediate" evidence="1">
    <location>
        <position position="102"/>
    </location>
</feature>
<feature type="binding site" description="via phosphate group" evidence="1">
    <location>
        <position position="102"/>
    </location>
    <ligand>
        <name>Mg(2+)</name>
        <dbReference type="ChEBI" id="CHEBI:18420"/>
    </ligand>
</feature>
<feature type="binding site" evidence="1">
    <location>
        <position position="241"/>
    </location>
    <ligand>
        <name>Mg(2+)</name>
        <dbReference type="ChEBI" id="CHEBI:18420"/>
    </ligand>
</feature>
<feature type="binding site" evidence="1">
    <location>
        <position position="243"/>
    </location>
    <ligand>
        <name>Mg(2+)</name>
        <dbReference type="ChEBI" id="CHEBI:18420"/>
    </ligand>
</feature>
<feature type="binding site" evidence="1">
    <location>
        <position position="245"/>
    </location>
    <ligand>
        <name>Mg(2+)</name>
        <dbReference type="ChEBI" id="CHEBI:18420"/>
    </ligand>
</feature>
<feature type="modified residue" description="Phosphoserine" evidence="1">
    <location>
        <position position="102"/>
    </location>
</feature>
<proteinExistence type="inferred from homology"/>
<comment type="function">
    <text evidence="1">Catalyzes the conversion of glucosamine-6-phosphate to glucosamine-1-phosphate.</text>
</comment>
<comment type="catalytic activity">
    <reaction evidence="1">
        <text>alpha-D-glucosamine 1-phosphate = D-glucosamine 6-phosphate</text>
        <dbReference type="Rhea" id="RHEA:23424"/>
        <dbReference type="ChEBI" id="CHEBI:58516"/>
        <dbReference type="ChEBI" id="CHEBI:58725"/>
        <dbReference type="EC" id="5.4.2.10"/>
    </reaction>
</comment>
<comment type="cofactor">
    <cofactor evidence="1">
        <name>Mg(2+)</name>
        <dbReference type="ChEBI" id="CHEBI:18420"/>
    </cofactor>
    <text evidence="1">Binds 1 Mg(2+) ion per subunit.</text>
</comment>
<comment type="PTM">
    <text evidence="1">Activated by phosphorylation.</text>
</comment>
<comment type="similarity">
    <text evidence="1">Belongs to the phosphohexose mutase family.</text>
</comment>
<protein>
    <recommendedName>
        <fullName evidence="1">Phosphoglucosamine mutase</fullName>
        <ecNumber evidence="1">5.4.2.10</ecNumber>
    </recommendedName>
</protein>
<sequence>MKQRQFFGTDGIRGKVGAGKMTPELALKLGWAAGRVLSRSGTQKVIIGKDTRISGYLFESALEAGLSAAGLDVMLIGPMPTPAVAYLTRTFRAEAGIVISASHNPYYDNGIKFFANDGSKLDDEVELEIEAELEKPLTCVESHLLGKVNRIDDAAGRYIEYCKSHFPAEQTLSGLKIVVDCAHGATYHIAPSVFRELGAEVIAIGDKPNGLNINDKVGATSMGQICETVLAENADLGIALDGDGDRIMMVNRHGRVIDGDEILYILACDAQKRGVLRGGVVGTLMSNLGLDLALQALEIPFVRSKVGDRYVMELLKEHDWRIGGENSGHILNLDHGTTGDGIVAGILVLAAMQRQNASLEALTANITMLPQVLVNVRFEGDNDPLASEVVLAAQAEVEQKLGARGRVLLRKSGTEPLLRVMVEGDEQEAVTEYANYIADAVRNLV</sequence>
<name>GLMM_SHEPA</name>
<reference key="1">
    <citation type="submission" date="2007-10" db="EMBL/GenBank/DDBJ databases">
        <title>Complete sequence of Shewanella pealeana ATCC 700345.</title>
        <authorList>
            <consortium name="US DOE Joint Genome Institute"/>
            <person name="Copeland A."/>
            <person name="Lucas S."/>
            <person name="Lapidus A."/>
            <person name="Barry K."/>
            <person name="Glavina del Rio T."/>
            <person name="Dalin E."/>
            <person name="Tice H."/>
            <person name="Pitluck S."/>
            <person name="Chertkov O."/>
            <person name="Brettin T."/>
            <person name="Bruce D."/>
            <person name="Detter J.C."/>
            <person name="Han C."/>
            <person name="Schmutz J."/>
            <person name="Larimer F."/>
            <person name="Land M."/>
            <person name="Hauser L."/>
            <person name="Kyrpides N."/>
            <person name="Kim E."/>
            <person name="Zhao J.-S.Z."/>
            <person name="Manno D."/>
            <person name="Hawari J."/>
            <person name="Richardson P."/>
        </authorList>
    </citation>
    <scope>NUCLEOTIDE SEQUENCE [LARGE SCALE GENOMIC DNA]</scope>
    <source>
        <strain>ATCC 700345 / ANG-SQ1</strain>
    </source>
</reference>
<organism>
    <name type="scientific">Shewanella pealeana (strain ATCC 700345 / ANG-SQ1)</name>
    <dbReference type="NCBI Taxonomy" id="398579"/>
    <lineage>
        <taxon>Bacteria</taxon>
        <taxon>Pseudomonadati</taxon>
        <taxon>Pseudomonadota</taxon>
        <taxon>Gammaproteobacteria</taxon>
        <taxon>Alteromonadales</taxon>
        <taxon>Shewanellaceae</taxon>
        <taxon>Shewanella</taxon>
    </lineage>
</organism>
<dbReference type="EC" id="5.4.2.10" evidence="1"/>
<dbReference type="EMBL" id="CP000851">
    <property type="protein sequence ID" value="ABV88382.1"/>
    <property type="molecule type" value="Genomic_DNA"/>
</dbReference>
<dbReference type="RefSeq" id="WP_012156286.1">
    <property type="nucleotide sequence ID" value="NC_009901.1"/>
</dbReference>
<dbReference type="SMR" id="A8H745"/>
<dbReference type="STRING" id="398579.Spea_3065"/>
<dbReference type="KEGG" id="spl:Spea_3065"/>
<dbReference type="eggNOG" id="COG1109">
    <property type="taxonomic scope" value="Bacteria"/>
</dbReference>
<dbReference type="HOGENOM" id="CLU_016950_7_0_6"/>
<dbReference type="OrthoDB" id="9803322at2"/>
<dbReference type="Proteomes" id="UP000002608">
    <property type="component" value="Chromosome"/>
</dbReference>
<dbReference type="GO" id="GO:0005829">
    <property type="term" value="C:cytosol"/>
    <property type="evidence" value="ECO:0007669"/>
    <property type="project" value="TreeGrafter"/>
</dbReference>
<dbReference type="GO" id="GO:0000287">
    <property type="term" value="F:magnesium ion binding"/>
    <property type="evidence" value="ECO:0007669"/>
    <property type="project" value="UniProtKB-UniRule"/>
</dbReference>
<dbReference type="GO" id="GO:0008966">
    <property type="term" value="F:phosphoglucosamine mutase activity"/>
    <property type="evidence" value="ECO:0007669"/>
    <property type="project" value="UniProtKB-UniRule"/>
</dbReference>
<dbReference type="GO" id="GO:0004615">
    <property type="term" value="F:phosphomannomutase activity"/>
    <property type="evidence" value="ECO:0007669"/>
    <property type="project" value="TreeGrafter"/>
</dbReference>
<dbReference type="GO" id="GO:0005975">
    <property type="term" value="P:carbohydrate metabolic process"/>
    <property type="evidence" value="ECO:0007669"/>
    <property type="project" value="InterPro"/>
</dbReference>
<dbReference type="GO" id="GO:0009252">
    <property type="term" value="P:peptidoglycan biosynthetic process"/>
    <property type="evidence" value="ECO:0007669"/>
    <property type="project" value="TreeGrafter"/>
</dbReference>
<dbReference type="GO" id="GO:0006048">
    <property type="term" value="P:UDP-N-acetylglucosamine biosynthetic process"/>
    <property type="evidence" value="ECO:0007669"/>
    <property type="project" value="TreeGrafter"/>
</dbReference>
<dbReference type="CDD" id="cd05802">
    <property type="entry name" value="GlmM"/>
    <property type="match status" value="1"/>
</dbReference>
<dbReference type="FunFam" id="3.30.310.50:FF:000001">
    <property type="entry name" value="Phosphoglucosamine mutase"/>
    <property type="match status" value="1"/>
</dbReference>
<dbReference type="FunFam" id="3.40.120.10:FF:000001">
    <property type="entry name" value="Phosphoglucosamine mutase"/>
    <property type="match status" value="1"/>
</dbReference>
<dbReference type="FunFam" id="3.40.120.10:FF:000003">
    <property type="entry name" value="Phosphoglucosamine mutase"/>
    <property type="match status" value="1"/>
</dbReference>
<dbReference type="Gene3D" id="3.40.120.10">
    <property type="entry name" value="Alpha-D-Glucose-1,6-Bisphosphate, subunit A, domain 3"/>
    <property type="match status" value="3"/>
</dbReference>
<dbReference type="Gene3D" id="3.30.310.50">
    <property type="entry name" value="Alpha-D-phosphohexomutase, C-terminal domain"/>
    <property type="match status" value="1"/>
</dbReference>
<dbReference type="HAMAP" id="MF_01554_B">
    <property type="entry name" value="GlmM_B"/>
    <property type="match status" value="1"/>
</dbReference>
<dbReference type="InterPro" id="IPR005844">
    <property type="entry name" value="A-D-PHexomutase_a/b/a-I"/>
</dbReference>
<dbReference type="InterPro" id="IPR016055">
    <property type="entry name" value="A-D-PHexomutase_a/b/a-I/II/III"/>
</dbReference>
<dbReference type="InterPro" id="IPR005845">
    <property type="entry name" value="A-D-PHexomutase_a/b/a-II"/>
</dbReference>
<dbReference type="InterPro" id="IPR005846">
    <property type="entry name" value="A-D-PHexomutase_a/b/a-III"/>
</dbReference>
<dbReference type="InterPro" id="IPR005843">
    <property type="entry name" value="A-D-PHexomutase_C"/>
</dbReference>
<dbReference type="InterPro" id="IPR036900">
    <property type="entry name" value="A-D-PHexomutase_C_sf"/>
</dbReference>
<dbReference type="InterPro" id="IPR016066">
    <property type="entry name" value="A-D-PHexomutase_CS"/>
</dbReference>
<dbReference type="InterPro" id="IPR005841">
    <property type="entry name" value="Alpha-D-phosphohexomutase_SF"/>
</dbReference>
<dbReference type="InterPro" id="IPR006352">
    <property type="entry name" value="GlmM_bact"/>
</dbReference>
<dbReference type="InterPro" id="IPR050060">
    <property type="entry name" value="Phosphoglucosamine_mutase"/>
</dbReference>
<dbReference type="NCBIfam" id="TIGR01455">
    <property type="entry name" value="glmM"/>
    <property type="match status" value="1"/>
</dbReference>
<dbReference type="NCBIfam" id="NF008139">
    <property type="entry name" value="PRK10887.1"/>
    <property type="match status" value="1"/>
</dbReference>
<dbReference type="PANTHER" id="PTHR42946:SF1">
    <property type="entry name" value="PHOSPHOGLUCOMUTASE (ALPHA-D-GLUCOSE-1,6-BISPHOSPHATE-DEPENDENT)"/>
    <property type="match status" value="1"/>
</dbReference>
<dbReference type="PANTHER" id="PTHR42946">
    <property type="entry name" value="PHOSPHOHEXOSE MUTASE"/>
    <property type="match status" value="1"/>
</dbReference>
<dbReference type="Pfam" id="PF02878">
    <property type="entry name" value="PGM_PMM_I"/>
    <property type="match status" value="1"/>
</dbReference>
<dbReference type="Pfam" id="PF02879">
    <property type="entry name" value="PGM_PMM_II"/>
    <property type="match status" value="1"/>
</dbReference>
<dbReference type="Pfam" id="PF02880">
    <property type="entry name" value="PGM_PMM_III"/>
    <property type="match status" value="1"/>
</dbReference>
<dbReference type="Pfam" id="PF00408">
    <property type="entry name" value="PGM_PMM_IV"/>
    <property type="match status" value="1"/>
</dbReference>
<dbReference type="PRINTS" id="PR00509">
    <property type="entry name" value="PGMPMM"/>
</dbReference>
<dbReference type="SUPFAM" id="SSF55957">
    <property type="entry name" value="Phosphoglucomutase, C-terminal domain"/>
    <property type="match status" value="1"/>
</dbReference>
<dbReference type="SUPFAM" id="SSF53738">
    <property type="entry name" value="Phosphoglucomutase, first 3 domains"/>
    <property type="match status" value="3"/>
</dbReference>
<dbReference type="PROSITE" id="PS00710">
    <property type="entry name" value="PGM_PMM"/>
    <property type="match status" value="1"/>
</dbReference>